<organism>
    <name type="scientific">Pseudomonas putida</name>
    <name type="common">Arthrobacter siderocapsulatus</name>
    <dbReference type="NCBI Taxonomy" id="303"/>
    <lineage>
        <taxon>Bacteria</taxon>
        <taxon>Pseudomonadati</taxon>
        <taxon>Pseudomonadota</taxon>
        <taxon>Gammaproteobacteria</taxon>
        <taxon>Pseudomonadales</taxon>
        <taxon>Pseudomonadaceae</taxon>
        <taxon>Pseudomonas</taxon>
    </lineage>
</organism>
<comment type="function">
    <text>Involved in regulation of chlorinated catechol metabolism. Transcriptional activator of the clcABD chlorocatechol oxidative operon.</text>
</comment>
<comment type="subcellular location">
    <subcellularLocation>
        <location>Cytoplasm</location>
    </subcellularLocation>
</comment>
<comment type="similarity">
    <text evidence="2">Belongs to the LysR transcriptional regulatory family.</text>
</comment>
<evidence type="ECO:0000255" key="1">
    <source>
        <dbReference type="PROSITE-ProRule" id="PRU00253"/>
    </source>
</evidence>
<evidence type="ECO:0000305" key="2"/>
<sequence length="294" mass="32528">MEFRQLRYFIAVAEEGNIGAAARRLHISQPPITRQIQALEQDLGVVLFERTHRGVELTAAGTTFLEDARRLLHVTEISRVRSRAASRGEIGELRVAYFGTVVLHTLPLLLRQLLSVAPSATVSLTQMSKNRQIEALDAGTIDIGFGRFYPYQEGVVVRNVTNERLFLGAQKSRARSFGEQVHCSALRNEPFILFPREGRPSFADEVIGVFKNARVEPKVVAIVEDVNAAMALALAGVGVTIVPETVAMISWPDFGFTELVGSKATVPVSCIYRHDHIAPILKTFLNLLPIRESQ</sequence>
<proteinExistence type="inferred from homology"/>
<gene>
    <name type="primary">clcR</name>
</gene>
<keyword id="KW-0010">Activator</keyword>
<keyword id="KW-0058">Aromatic hydrocarbons catabolism</keyword>
<keyword id="KW-0963">Cytoplasm</keyword>
<keyword id="KW-0238">DNA-binding</keyword>
<keyword id="KW-0614">Plasmid</keyword>
<keyword id="KW-0804">Transcription</keyword>
<keyword id="KW-0805">Transcription regulation</keyword>
<dbReference type="EMBL" id="L06464">
    <property type="protein sequence ID" value="AAA25771.1"/>
    <property type="molecule type" value="Genomic_DNA"/>
</dbReference>
<dbReference type="PIR" id="A40641">
    <property type="entry name" value="A40641"/>
</dbReference>
<dbReference type="SMR" id="Q05840"/>
<dbReference type="GO" id="GO:0005737">
    <property type="term" value="C:cytoplasm"/>
    <property type="evidence" value="ECO:0007669"/>
    <property type="project" value="UniProtKB-SubCell"/>
</dbReference>
<dbReference type="GO" id="GO:0032993">
    <property type="term" value="C:protein-DNA complex"/>
    <property type="evidence" value="ECO:0007669"/>
    <property type="project" value="TreeGrafter"/>
</dbReference>
<dbReference type="GO" id="GO:0003677">
    <property type="term" value="F:DNA binding"/>
    <property type="evidence" value="ECO:0007669"/>
    <property type="project" value="UniProtKB-KW"/>
</dbReference>
<dbReference type="GO" id="GO:0003700">
    <property type="term" value="F:DNA-binding transcription factor activity"/>
    <property type="evidence" value="ECO:0007669"/>
    <property type="project" value="InterPro"/>
</dbReference>
<dbReference type="GO" id="GO:0009056">
    <property type="term" value="P:catabolic process"/>
    <property type="evidence" value="ECO:0007669"/>
    <property type="project" value="UniProtKB-KW"/>
</dbReference>
<dbReference type="CDD" id="cd08485">
    <property type="entry name" value="PBP2_ClcR"/>
    <property type="match status" value="1"/>
</dbReference>
<dbReference type="FunFam" id="1.10.10.10:FF:000001">
    <property type="entry name" value="LysR family transcriptional regulator"/>
    <property type="match status" value="1"/>
</dbReference>
<dbReference type="Gene3D" id="3.40.190.10">
    <property type="entry name" value="Periplasmic binding protein-like II"/>
    <property type="match status" value="2"/>
</dbReference>
<dbReference type="Gene3D" id="1.10.10.10">
    <property type="entry name" value="Winged helix-like DNA-binding domain superfamily/Winged helix DNA-binding domain"/>
    <property type="match status" value="1"/>
</dbReference>
<dbReference type="InterPro" id="IPR037421">
    <property type="entry name" value="ClcR_PBP2"/>
</dbReference>
<dbReference type="InterPro" id="IPR005119">
    <property type="entry name" value="LysR_subst-bd"/>
</dbReference>
<dbReference type="InterPro" id="IPR000847">
    <property type="entry name" value="Tscrpt_reg_HTH_LysR"/>
</dbReference>
<dbReference type="InterPro" id="IPR036388">
    <property type="entry name" value="WH-like_DNA-bd_sf"/>
</dbReference>
<dbReference type="InterPro" id="IPR036390">
    <property type="entry name" value="WH_DNA-bd_sf"/>
</dbReference>
<dbReference type="PANTHER" id="PTHR30346:SF0">
    <property type="entry name" value="HCA OPERON TRANSCRIPTIONAL ACTIVATOR HCAR"/>
    <property type="match status" value="1"/>
</dbReference>
<dbReference type="PANTHER" id="PTHR30346">
    <property type="entry name" value="TRANSCRIPTIONAL DUAL REGULATOR HCAR-RELATED"/>
    <property type="match status" value="1"/>
</dbReference>
<dbReference type="Pfam" id="PF00126">
    <property type="entry name" value="HTH_1"/>
    <property type="match status" value="1"/>
</dbReference>
<dbReference type="Pfam" id="PF03466">
    <property type="entry name" value="LysR_substrate"/>
    <property type="match status" value="1"/>
</dbReference>
<dbReference type="PRINTS" id="PR00039">
    <property type="entry name" value="HTHLYSR"/>
</dbReference>
<dbReference type="SUPFAM" id="SSF53850">
    <property type="entry name" value="Periplasmic binding protein-like II"/>
    <property type="match status" value="1"/>
</dbReference>
<dbReference type="SUPFAM" id="SSF46785">
    <property type="entry name" value="Winged helix' DNA-binding domain"/>
    <property type="match status" value="1"/>
</dbReference>
<dbReference type="PROSITE" id="PS50931">
    <property type="entry name" value="HTH_LYSR"/>
    <property type="match status" value="1"/>
</dbReference>
<reference key="1">
    <citation type="journal article" date="1993" name="J. Bacteriol.">
        <title>Nucleotide sequence and initial functional characterization of the clcR gene encoding a LysR family activator of the clcABD chlorocatechol operon in Pseudomonas putida.</title>
        <authorList>
            <person name="Coco W.M."/>
            <person name="Rothmel R.K."/>
            <person name="Henikoff S."/>
            <person name="Chakrabarty A.M."/>
        </authorList>
    </citation>
    <scope>NUCLEOTIDE SEQUENCE [GENOMIC DNA]</scope>
    <source>
        <strain>PAC27</strain>
    </source>
</reference>
<geneLocation type="plasmid">
    <name>pDC15</name>
</geneLocation>
<name>CLCR_PSEPU</name>
<protein>
    <recommendedName>
        <fullName>HTH-type transcriptional regulator ClcR</fullName>
    </recommendedName>
    <alternativeName>
        <fullName>ClcABD operon transcriptional activator</fullName>
    </alternativeName>
</protein>
<accession>Q05840</accession>
<feature type="chain" id="PRO_0000105611" description="HTH-type transcriptional regulator ClcR">
    <location>
        <begin position="1"/>
        <end position="294"/>
    </location>
</feature>
<feature type="domain" description="HTH lysR-type" evidence="1">
    <location>
        <begin position="1"/>
        <end position="58"/>
    </location>
</feature>
<feature type="DNA-binding region" description="H-T-H motif" evidence="1">
    <location>
        <begin position="18"/>
        <end position="37"/>
    </location>
</feature>